<comment type="function">
    <text evidence="3">Receptor on natural killer (NK) cells for some HLA-C alleles such as w4 and w6. Inhibits the activity of NK cells thus preventing cell lysis.</text>
</comment>
<comment type="subunit">
    <text evidence="3">Interacts with ARRB2. Interacts with PTPN6; the interaction is enhanced by ARRB2. Interacts with PTPN11; the interaction is enhanced by ARRB2.</text>
</comment>
<comment type="interaction">
    <interactant intactId="EBI-8684277">
        <id>P43626</id>
    </interactant>
    <interactant intactId="EBI-1046513">
        <id>P01889</id>
        <label>HLA-B</label>
    </interactant>
    <organismsDiffer>false</organismsDiffer>
    <experiments>2</experiments>
</comment>
<comment type="interaction">
    <interactant intactId="EBI-8684277">
        <id>P43626</id>
    </interactant>
    <interactant intactId="EBI-1051396">
        <id>P10321</id>
        <label>HLA-C</label>
    </interactant>
    <organismsDiffer>false</organismsDiffer>
    <experiments>15</experiments>
</comment>
<comment type="interaction">
    <interactant intactId="EBI-8684277">
        <id>P43626</id>
    </interactant>
    <interactant intactId="EBI-22185948">
        <id>Q7YQB1</id>
        <label>HLA-C</label>
    </interactant>
    <organismsDiffer>false</organismsDiffer>
    <experiments>2</experiments>
</comment>
<comment type="interaction">
    <interactant intactId="EBI-8684277">
        <id>P43626</id>
    </interactant>
    <interactant intactId="EBI-22185566">
        <id>Q5RIP0</id>
        <label>HLA-Cw</label>
    </interactant>
    <organismsDiffer>false</organismsDiffer>
    <experiments>2</experiments>
</comment>
<comment type="interaction">
    <interactant intactId="EBI-8684277">
        <id>P43626</id>
    </interactant>
    <interactant intactId="EBI-78260">
        <id>P29350</id>
        <label>PTPN6</label>
    </interactant>
    <organismsDiffer>false</organismsDiffer>
    <experiments>4</experiments>
</comment>
<comment type="subcellular location">
    <subcellularLocation>
        <location evidence="4">Cell membrane</location>
        <topology>Single-pass type I membrane protein</topology>
    </subcellularLocation>
</comment>
<comment type="alternative products">
    <event type="alternative splicing"/>
    <isoform>
        <id>P43626-1</id>
        <name>1</name>
        <sequence type="displayed"/>
    </isoform>
    <isoform>
        <id>P43626-2</id>
        <name>2</name>
        <sequence type="described" ref="VSP_056314"/>
    </isoform>
</comment>
<comment type="tissue specificity">
    <text evidence="8">Expressed by NK cells.</text>
</comment>
<comment type="similarity">
    <text evidence="11">Belongs to the immunoglobulin superfamily.</text>
</comment>
<dbReference type="EMBL" id="L41267">
    <property type="protein sequence ID" value="AAA69868.1"/>
    <property type="molecule type" value="mRNA"/>
</dbReference>
<dbReference type="EMBL" id="U24076">
    <property type="protein sequence ID" value="AAC50335.1"/>
    <property type="molecule type" value="mRNA"/>
</dbReference>
<dbReference type="EMBL" id="U24078">
    <property type="protein sequence ID" value="AAC50337.1"/>
    <property type="molecule type" value="mRNA"/>
</dbReference>
<dbReference type="EMBL" id="AF022045">
    <property type="protein sequence ID" value="AAB95318.1"/>
    <property type="molecule type" value="mRNA"/>
</dbReference>
<dbReference type="EMBL" id="AY366237">
    <property type="protein sequence ID" value="AAR16195.1"/>
    <property type="molecule type" value="mRNA"/>
</dbReference>
<dbReference type="EMBL" id="AY366239">
    <property type="protein sequence ID" value="AAR16197.1"/>
    <property type="molecule type" value="mRNA"/>
</dbReference>
<dbReference type="EMBL" id="GU182340">
    <property type="status" value="NOT_ANNOTATED_CDS"/>
    <property type="molecule type" value="Genomic_DNA"/>
</dbReference>
<dbReference type="EMBL" id="GU182342">
    <property type="status" value="NOT_ANNOTATED_CDS"/>
    <property type="molecule type" value="Genomic_DNA"/>
</dbReference>
<dbReference type="EMBL" id="GU182344">
    <property type="status" value="NOT_ANNOTATED_CDS"/>
    <property type="molecule type" value="Genomic_DNA"/>
</dbReference>
<dbReference type="EMBL" id="GU182348">
    <property type="status" value="NOT_ANNOTATED_CDS"/>
    <property type="molecule type" value="Genomic_DNA"/>
</dbReference>
<dbReference type="EMBL" id="GU182350">
    <property type="status" value="NOT_ANNOTATED_CDS"/>
    <property type="molecule type" value="Genomic_DNA"/>
</dbReference>
<dbReference type="EMBL" id="GU182352">
    <property type="status" value="NOT_ANNOTATED_CDS"/>
    <property type="molecule type" value="Genomic_DNA"/>
</dbReference>
<dbReference type="EMBL" id="GU182354">
    <property type="status" value="NOT_ANNOTATED_CDS"/>
    <property type="molecule type" value="Genomic_DNA"/>
</dbReference>
<dbReference type="EMBL" id="GU182356">
    <property type="status" value="NOT_ANNOTATED_CDS"/>
    <property type="molecule type" value="Genomic_DNA"/>
</dbReference>
<dbReference type="EMBL" id="GU182360">
    <property type="status" value="NOT_ANNOTATED_CDS"/>
    <property type="molecule type" value="Genomic_DNA"/>
</dbReference>
<dbReference type="EMBL" id="GU182358">
    <property type="status" value="NOT_ANNOTATED_CDS"/>
    <property type="molecule type" value="Genomic_DNA"/>
</dbReference>
<dbReference type="EMBL" id="JX008029">
    <property type="protein sequence ID" value="AFV74759.1"/>
    <property type="molecule type" value="Genomic_DNA"/>
</dbReference>
<dbReference type="EMBL" id="JX008031">
    <property type="protein sequence ID" value="AFV74770.1"/>
    <property type="molecule type" value="Genomic_DNA"/>
</dbReference>
<dbReference type="EMBL" id="KJ699235">
    <property type="protein sequence ID" value="AIE89873.1"/>
    <property type="molecule type" value="mRNA"/>
</dbReference>
<dbReference type="EMBL" id="AY789055">
    <property type="protein sequence ID" value="AAX23100.1"/>
    <property type="molecule type" value="mRNA"/>
</dbReference>
<dbReference type="EMBL" id="AY789056">
    <property type="protein sequence ID" value="AAX23101.1"/>
    <property type="molecule type" value="mRNA"/>
</dbReference>
<dbReference type="EMBL" id="KT438851">
    <property type="protein sequence ID" value="AMB66619.1"/>
    <property type="molecule type" value="Genomic_DNA"/>
</dbReference>
<dbReference type="EMBL" id="KT438852">
    <property type="protein sequence ID" value="AMB66620.1"/>
    <property type="molecule type" value="Genomic_DNA"/>
</dbReference>
<dbReference type="EMBL" id="LT630480">
    <property type="protein sequence ID" value="SHO29790.1"/>
    <property type="molecule type" value="Genomic_DNA"/>
</dbReference>
<dbReference type="EMBL" id="LR593889">
    <property type="protein sequence ID" value="VTS12101.1"/>
    <property type="molecule type" value="Genomic_DNA"/>
</dbReference>
<dbReference type="EMBL" id="LR593891">
    <property type="protein sequence ID" value="VTS12103.1"/>
    <property type="molecule type" value="Genomic_DNA"/>
</dbReference>
<dbReference type="EMBL" id="LR593909">
    <property type="protein sequence ID" value="VTS12121.1"/>
    <property type="molecule type" value="Genomic_DNA"/>
</dbReference>
<dbReference type="EMBL" id="LR593911">
    <property type="protein sequence ID" value="VTS12123.1"/>
    <property type="molecule type" value="Genomic_DNA"/>
</dbReference>
<dbReference type="EMBL" id="LR593912">
    <property type="protein sequence ID" value="VTS12124.1"/>
    <property type="molecule type" value="Genomic_DNA"/>
</dbReference>
<dbReference type="EMBL" id="LR593918">
    <property type="protein sequence ID" value="VTS12130.1"/>
    <property type="molecule type" value="Genomic_DNA"/>
</dbReference>
<dbReference type="EMBL" id="LR593940">
    <property type="protein sequence ID" value="VTS12152.1"/>
    <property type="molecule type" value="Genomic_DNA"/>
</dbReference>
<dbReference type="EMBL" id="LR593943">
    <property type="protein sequence ID" value="VTS12155.1"/>
    <property type="molecule type" value="Genomic_DNA"/>
</dbReference>
<dbReference type="EMBL" id="LR593950">
    <property type="protein sequence ID" value="VTS12162.1"/>
    <property type="molecule type" value="Genomic_DNA"/>
</dbReference>
<dbReference type="EMBL" id="LR593953">
    <property type="protein sequence ID" value="VTS12165.1"/>
    <property type="molecule type" value="Genomic_DNA"/>
</dbReference>
<dbReference type="EMBL" id="LR593960">
    <property type="protein sequence ID" value="VTS12172.1"/>
    <property type="molecule type" value="Genomic_DNA"/>
</dbReference>
<dbReference type="EMBL" id="LR593964">
    <property type="protein sequence ID" value="VTS12176.1"/>
    <property type="molecule type" value="Genomic_DNA"/>
</dbReference>
<dbReference type="EMBL" id="LR593971">
    <property type="protein sequence ID" value="VTS12183.1"/>
    <property type="molecule type" value="Genomic_DNA"/>
</dbReference>
<dbReference type="EMBL" id="LR593987">
    <property type="protein sequence ID" value="VTS12199.1"/>
    <property type="molecule type" value="Genomic_DNA"/>
</dbReference>
<dbReference type="EMBL" id="LR593988">
    <property type="protein sequence ID" value="VTS12200.1"/>
    <property type="molecule type" value="Genomic_DNA"/>
</dbReference>
<dbReference type="EMBL" id="LR593989">
    <property type="protein sequence ID" value="VTS12201.1"/>
    <property type="molecule type" value="Genomic_DNA"/>
</dbReference>
<dbReference type="EMBL" id="LR593995">
    <property type="protein sequence ID" value="VTS12207.1"/>
    <property type="molecule type" value="Genomic_DNA"/>
</dbReference>
<dbReference type="EMBL" id="LR593996">
    <property type="protein sequence ID" value="VTS12208.1"/>
    <property type="molecule type" value="Genomic_DNA"/>
</dbReference>
<dbReference type="EMBL" id="LR593997">
    <property type="protein sequence ID" value="VTS12209.1"/>
    <property type="molecule type" value="Genomic_DNA"/>
</dbReference>
<dbReference type="EMBL" id="LR593998">
    <property type="protein sequence ID" value="VTS12210.1"/>
    <property type="molecule type" value="Genomic_DNA"/>
</dbReference>
<dbReference type="EMBL" id="LR593999">
    <property type="protein sequence ID" value="VTS12211.1"/>
    <property type="molecule type" value="Genomic_DNA"/>
</dbReference>
<dbReference type="EMBL" id="LR594001">
    <property type="protein sequence ID" value="VTS12213.1"/>
    <property type="molecule type" value="Genomic_DNA"/>
</dbReference>
<dbReference type="EMBL" id="LR594002">
    <property type="protein sequence ID" value="VTS12214.1"/>
    <property type="molecule type" value="Genomic_DNA"/>
</dbReference>
<dbReference type="EMBL" id="LR594003">
    <property type="protein sequence ID" value="VTS12215.1"/>
    <property type="molecule type" value="Genomic_DNA"/>
</dbReference>
<dbReference type="EMBL" id="LR594005">
    <property type="protein sequence ID" value="VTS12217.1"/>
    <property type="molecule type" value="Genomic_DNA"/>
</dbReference>
<dbReference type="EMBL" id="KP420438">
    <property type="protein sequence ID" value="AJI80987.1"/>
    <property type="molecule type" value="Genomic_DNA"/>
</dbReference>
<dbReference type="EMBL" id="KP420439">
    <property type="protein sequence ID" value="AJI80995.1"/>
    <property type="molecule type" value="Genomic_DNA"/>
</dbReference>
<dbReference type="EMBL" id="KP420445">
    <property type="protein sequence ID" value="AJI81036.1"/>
    <property type="molecule type" value="Genomic_DNA"/>
</dbReference>
<dbReference type="EMBL" id="KU645197">
    <property type="protein sequence ID" value="ANJ04802.1"/>
    <property type="molecule type" value="Genomic_DNA"/>
</dbReference>
<dbReference type="EMBL" id="MN167509">
    <property type="protein sequence ID" value="QKY12235.1"/>
    <property type="molecule type" value="Genomic_DNA"/>
</dbReference>
<dbReference type="EMBL" id="MN167511">
    <property type="protein sequence ID" value="QKY12250.1"/>
    <property type="molecule type" value="Genomic_DNA"/>
</dbReference>
<dbReference type="EMBL" id="MN167512">
    <property type="protein sequence ID" value="QKY12257.1"/>
    <property type="molecule type" value="Genomic_DNA"/>
</dbReference>
<dbReference type="EMBL" id="MN167513">
    <property type="protein sequence ID" value="QKY12264.1"/>
    <property type="molecule type" value="Genomic_DNA"/>
</dbReference>
<dbReference type="EMBL" id="MN167514">
    <property type="protein sequence ID" value="QKY12271.1"/>
    <property type="molecule type" value="Genomic_DNA"/>
</dbReference>
<dbReference type="EMBL" id="MN167516">
    <property type="protein sequence ID" value="QKY12290.1"/>
    <property type="molecule type" value="Genomic_DNA"/>
</dbReference>
<dbReference type="EMBL" id="MN167522">
    <property type="protein sequence ID" value="QKY12345.1"/>
    <property type="molecule type" value="Genomic_DNA"/>
</dbReference>
<dbReference type="EMBL" id="MN167518">
    <property type="protein sequence ID" value="QKY12305.1"/>
    <property type="molecule type" value="Genomic_DNA"/>
</dbReference>
<dbReference type="EMBL" id="MN167524">
    <property type="protein sequence ID" value="QKY12359.1"/>
    <property type="molecule type" value="Genomic_DNA"/>
</dbReference>
<dbReference type="EMBL" id="AC011501">
    <property type="status" value="NOT_ANNOTATED_CDS"/>
    <property type="molecule type" value="Genomic_DNA"/>
</dbReference>
<dbReference type="EMBL" id="AC245128">
    <property type="status" value="NOT_ANNOTATED_CDS"/>
    <property type="molecule type" value="Genomic_DNA"/>
</dbReference>
<dbReference type="EMBL" id="CU041368">
    <property type="status" value="NOT_ANNOTATED_CDS"/>
    <property type="molecule type" value="Genomic_DNA"/>
</dbReference>
<dbReference type="EMBL" id="BC069344">
    <property type="protein sequence ID" value="AAH69344.1"/>
    <property type="molecule type" value="mRNA"/>
</dbReference>
<dbReference type="CCDS" id="CCDS12904.1">
    <molecule id="P43626-1"/>
</dbReference>
<dbReference type="PIR" id="A56247">
    <property type="entry name" value="A56247"/>
</dbReference>
<dbReference type="RefSeq" id="NP_055033.2">
    <molecule id="P43626-1"/>
    <property type="nucleotide sequence ID" value="NM_014218.3"/>
</dbReference>
<dbReference type="PDB" id="1IM9">
    <property type="method" value="X-ray"/>
    <property type="resolution" value="2.80 A"/>
    <property type="chains" value="D=22-245"/>
</dbReference>
<dbReference type="PDB" id="1NKR">
    <property type="method" value="X-ray"/>
    <property type="resolution" value="1.70 A"/>
    <property type="chains" value="A=22-221"/>
</dbReference>
<dbReference type="PDBsum" id="1IM9"/>
<dbReference type="PDBsum" id="1NKR"/>
<dbReference type="SMR" id="P43626"/>
<dbReference type="BioGRID" id="110003">
    <property type="interactions" value="29"/>
</dbReference>
<dbReference type="FunCoup" id="P43626">
    <property type="interactions" value="265"/>
</dbReference>
<dbReference type="IntAct" id="P43626">
    <property type="interactions" value="40"/>
</dbReference>
<dbReference type="MINT" id="P43626"/>
<dbReference type="STRING" id="9606.ENSP00000336769"/>
<dbReference type="ChEMBL" id="CHEMBL3712912"/>
<dbReference type="GlyCosmos" id="P43626">
    <property type="glycosylation" value="4 sites, No reported glycans"/>
</dbReference>
<dbReference type="GlyGen" id="P43626">
    <property type="glycosylation" value="5 sites"/>
</dbReference>
<dbReference type="iPTMnet" id="P43626"/>
<dbReference type="PhosphoSitePlus" id="P43626"/>
<dbReference type="BioMuta" id="KIR2DL1"/>
<dbReference type="DMDM" id="1171726"/>
<dbReference type="jPOST" id="P43626"/>
<dbReference type="MassIVE" id="P43626"/>
<dbReference type="PaxDb" id="9606-ENSP00000336769"/>
<dbReference type="PeptideAtlas" id="P43626"/>
<dbReference type="ABCD" id="P43626">
    <property type="antibodies" value="1 sequenced antibody"/>
</dbReference>
<dbReference type="Antibodypedia" id="21559">
    <property type="antibodies" value="734 antibodies from 27 providers"/>
</dbReference>
<dbReference type="DNASU" id="3802"/>
<dbReference type="Ensembl" id="ENST00000291633.7">
    <molecule id="P43626-2"/>
    <property type="protein sequence ID" value="ENSP00000291633.7"/>
    <property type="gene ID" value="ENSG00000125498.20"/>
</dbReference>
<dbReference type="Ensembl" id="ENST00000336077.11">
    <molecule id="P43626-1"/>
    <property type="protein sequence ID" value="ENSP00000336769.5"/>
    <property type="gene ID" value="ENSG00000125498.20"/>
</dbReference>
<dbReference type="Ensembl" id="ENST00000610327.4">
    <molecule id="P43626-1"/>
    <property type="protein sequence ID" value="ENSP00000482501.1"/>
    <property type="gene ID" value="ENSG00000277833.4"/>
</dbReference>
<dbReference type="Ensembl" id="ENST00000610627.1">
    <molecule id="P43626-1"/>
    <property type="protein sequence ID" value="ENSP00000483525.1"/>
    <property type="gene ID" value="ENSG00000276310.1"/>
</dbReference>
<dbReference type="Ensembl" id="ENST00000611594.1">
    <molecule id="P43626-1"/>
    <property type="protein sequence ID" value="ENSP00000482506.1"/>
    <property type="gene ID" value="ENSG00000274926.1"/>
</dbReference>
<dbReference type="Ensembl" id="ENST00000611611.4">
    <property type="protein sequence ID" value="ENSP00000478232.1"/>
    <property type="gene ID" value="ENSG00000278738.5"/>
</dbReference>
<dbReference type="Ensembl" id="ENST00000612504.1">
    <molecule id="P43626-1"/>
    <property type="protein sequence ID" value="ENSP00000477690.1"/>
    <property type="gene ID" value="ENSG00000275750.1"/>
</dbReference>
<dbReference type="Ensembl" id="ENST00000615298.1">
    <molecule id="P43626-1"/>
    <property type="protein sequence ID" value="ENSP00000482449.1"/>
    <property type="gene ID" value="ENSG00000273510.1"/>
</dbReference>
<dbReference type="Ensembl" id="ENST00000615920.4">
    <property type="protein sequence ID" value="ENSP00000482120.1"/>
    <property type="gene ID" value="ENSG00000273794.4"/>
</dbReference>
<dbReference type="Ensembl" id="ENST00000616076.4">
    <molecule id="P43626-1"/>
    <property type="protein sequence ID" value="ENSP00000478633.1"/>
    <property type="gene ID" value="ENSG00000278821.4"/>
</dbReference>
<dbReference type="Ensembl" id="ENST00000616302.4">
    <molecule id="P43626-1"/>
    <property type="protein sequence ID" value="ENSP00000478202.1"/>
    <property type="gene ID" value="ENSG00000276625.4"/>
</dbReference>
<dbReference type="Ensembl" id="ENST00000616310.1">
    <molecule id="P43626-1"/>
    <property type="protein sequence ID" value="ENSP00000478567.1"/>
    <property type="gene ID" value="ENSG00000275276.1"/>
</dbReference>
<dbReference type="Ensembl" id="ENST00000617247.1">
    <molecule id="P43626-1"/>
    <property type="protein sequence ID" value="ENSP00000480989.1"/>
    <property type="gene ID" value="ENSG00000274692.1"/>
</dbReference>
<dbReference type="Ensembl" id="ENST00000617376.1">
    <molecule id="P43626-2"/>
    <property type="protein sequence ID" value="ENSP00000484559.1"/>
    <property type="gene ID" value="ENSG00000278821.4"/>
</dbReference>
<dbReference type="Ensembl" id="ENST00000618507.1">
    <molecule id="P43626-1"/>
    <property type="protein sequence ID" value="ENSP00000479644.1"/>
    <property type="gene ID" value="ENSG00000278503.1"/>
</dbReference>
<dbReference type="Ensembl" id="ENST00000618563.1">
    <molecule id="P43626-2"/>
    <property type="protein sequence ID" value="ENSP00000484361.1"/>
    <property type="gene ID" value="ENSG00000276625.4"/>
</dbReference>
<dbReference type="Ensembl" id="ENST00000618987.1">
    <molecule id="P43626-1"/>
    <property type="protein sequence ID" value="ENSP00000480247.1"/>
    <property type="gene ID" value="ENSG00000277356.1"/>
</dbReference>
<dbReference type="Ensembl" id="ENST00000619424.1">
    <molecule id="P43626-1"/>
    <property type="protein sequence ID" value="ENSP00000478054.1"/>
    <property type="gene ID" value="ENSG00000278755.1"/>
</dbReference>
<dbReference type="Ensembl" id="ENST00000620449.1">
    <molecule id="P43626-2"/>
    <property type="protein sequence ID" value="ENSP00000478263.1"/>
    <property type="gene ID" value="ENSG00000277833.4"/>
</dbReference>
<dbReference type="Ensembl" id="ENST00000620588.1">
    <molecule id="P43626-1"/>
    <property type="protein sequence ID" value="ENSP00000478604.1"/>
    <property type="gene ID" value="ENSG00000278248.1"/>
</dbReference>
<dbReference type="Ensembl" id="ENST00000622463.4">
    <property type="protein sequence ID" value="ENSP00000479363.1"/>
    <property type="gene ID" value="ENSG00000278495.4"/>
</dbReference>
<dbReference type="Ensembl" id="ENST00000638780.1">
    <molecule id="P43626-2"/>
    <property type="protein sequence ID" value="ENSP00000491211.1"/>
    <property type="gene ID" value="ENSG00000284145.2"/>
</dbReference>
<dbReference type="Ensembl" id="ENST00000639230.2">
    <molecule id="P43626-1"/>
    <property type="protein sequence ID" value="ENSP00000491930.1"/>
    <property type="gene ID" value="ENSG00000284401.2"/>
</dbReference>
<dbReference type="Ensembl" id="ENST00000639616.1">
    <molecule id="P43626-2"/>
    <property type="protein sequence ID" value="ENSP00000492549.1"/>
    <property type="gene ID" value="ENSG00000283723.2"/>
</dbReference>
<dbReference type="Ensembl" id="ENST00000639917.2">
    <molecule id="P43626-1"/>
    <property type="protein sequence ID" value="ENSP00000492250.1"/>
    <property type="gene ID" value="ENSG00000283723.2"/>
</dbReference>
<dbReference type="Ensembl" id="ENST00000640308.2">
    <molecule id="P43626-1"/>
    <property type="protein sequence ID" value="ENSP00000492477.1"/>
    <property type="gene ID" value="ENSG00000284145.2"/>
</dbReference>
<dbReference type="Ensembl" id="ENST00000640477.2">
    <molecule id="P43626-1"/>
    <property type="protein sequence ID" value="ENSP00000491348.1"/>
    <property type="gene ID" value="ENSG00000284347.2"/>
</dbReference>
<dbReference type="Ensembl" id="ENST00000640546.1">
    <molecule id="P43626-2"/>
    <property type="protein sequence ID" value="ENSP00000492859.1"/>
    <property type="gene ID" value="ENSG00000284347.2"/>
</dbReference>
<dbReference type="Ensembl" id="ENST00000640661.1">
    <molecule id="P43626-2"/>
    <property type="protein sequence ID" value="ENSP00000491721.1"/>
    <property type="gene ID" value="ENSG00000284401.2"/>
</dbReference>
<dbReference type="GeneID" id="3802"/>
<dbReference type="KEGG" id="hsa:3802"/>
<dbReference type="MANE-Select" id="ENST00000336077.11">
    <property type="protein sequence ID" value="ENSP00000336769.5"/>
    <property type="RefSeq nucleotide sequence ID" value="NM_014218.3"/>
    <property type="RefSeq protein sequence ID" value="NP_055033.2"/>
</dbReference>
<dbReference type="UCSC" id="uc010erz.2">
    <molecule id="P43626-1"/>
    <property type="organism name" value="human"/>
</dbReference>
<dbReference type="AGR" id="HGNC:6329"/>
<dbReference type="CTD" id="3802"/>
<dbReference type="DisGeNET" id="3802"/>
<dbReference type="GeneCards" id="KIR2DL1"/>
<dbReference type="HGNC" id="HGNC:6329">
    <property type="gene designation" value="KIR2DL1"/>
</dbReference>
<dbReference type="HPA" id="ENSG00000125498">
    <property type="expression patterns" value="Tissue enhanced (lymphoid)"/>
</dbReference>
<dbReference type="MIM" id="604936">
    <property type="type" value="gene"/>
</dbReference>
<dbReference type="neXtProt" id="NX_P43626"/>
<dbReference type="OpenTargets" id="ENSG00000125498"/>
<dbReference type="PharmGKB" id="PA30114"/>
<dbReference type="VEuPathDB" id="HostDB:ENSG00000125498"/>
<dbReference type="eggNOG" id="ENOG502RU21">
    <property type="taxonomic scope" value="Eukaryota"/>
</dbReference>
<dbReference type="GeneTree" id="ENSGT01100000263478"/>
<dbReference type="HOGENOM" id="CLU_021100_2_1_1"/>
<dbReference type="InParanoid" id="P43626"/>
<dbReference type="OMA" id="HTTEETW"/>
<dbReference type="OrthoDB" id="9516369at2759"/>
<dbReference type="PAN-GO" id="P43626">
    <property type="GO annotations" value="1 GO annotation based on evolutionary models"/>
</dbReference>
<dbReference type="PhylomeDB" id="P43626"/>
<dbReference type="TreeFam" id="TF352669"/>
<dbReference type="PathwayCommons" id="P43626"/>
<dbReference type="Reactome" id="R-HSA-198933">
    <property type="pathway name" value="Immunoregulatory interactions between a Lymphoid and a non-Lymphoid cell"/>
</dbReference>
<dbReference type="SignaLink" id="P43626"/>
<dbReference type="BioGRID-ORCS" id="3802">
    <property type="hits" value="9 hits in 1071 CRISPR screens"/>
</dbReference>
<dbReference type="EvolutionaryTrace" id="P43626"/>
<dbReference type="GeneWiki" id="KIR2DL1"/>
<dbReference type="GenomeRNAi" id="3802"/>
<dbReference type="Pharos" id="P43626">
    <property type="development level" value="Tbio"/>
</dbReference>
<dbReference type="PRO" id="PR:P43626"/>
<dbReference type="Proteomes" id="UP000005640">
    <property type="component" value="Chromosome 19"/>
</dbReference>
<dbReference type="RNAct" id="P43626">
    <property type="molecule type" value="protein"/>
</dbReference>
<dbReference type="Bgee" id="ENSG00000125498">
    <property type="expression patterns" value="Expressed in male germ line stem cell (sensu Vertebrata) in testis and 27 other cell types or tissues"/>
</dbReference>
<dbReference type="ExpressionAtlas" id="P43626">
    <property type="expression patterns" value="baseline and differential"/>
</dbReference>
<dbReference type="GO" id="GO:0005886">
    <property type="term" value="C:plasma membrane"/>
    <property type="evidence" value="ECO:0000314"/>
    <property type="project" value="UniProtKB"/>
</dbReference>
<dbReference type="GO" id="GO:0038023">
    <property type="term" value="F:signaling receptor activity"/>
    <property type="evidence" value="ECO:0000304"/>
    <property type="project" value="ProtInc"/>
</dbReference>
<dbReference type="GO" id="GO:0006955">
    <property type="term" value="P:immune response"/>
    <property type="evidence" value="ECO:0000304"/>
    <property type="project" value="ProtInc"/>
</dbReference>
<dbReference type="GO" id="GO:0002764">
    <property type="term" value="P:immune response-regulating signaling pathway"/>
    <property type="evidence" value="ECO:0000318"/>
    <property type="project" value="GO_Central"/>
</dbReference>
<dbReference type="GO" id="GO:0002769">
    <property type="term" value="P:natural killer cell inhibitory signaling pathway"/>
    <property type="evidence" value="ECO:0000314"/>
    <property type="project" value="UniProtKB"/>
</dbReference>
<dbReference type="CDD" id="cd05711">
    <property type="entry name" value="IgC2_D2_LILR_KIR_like"/>
    <property type="match status" value="1"/>
</dbReference>
<dbReference type="FunFam" id="2.60.40.10:FF:000033">
    <property type="entry name" value="Killer cell immunoglobulin-like receptor"/>
    <property type="match status" value="1"/>
</dbReference>
<dbReference type="FunFam" id="2.60.40.10:FF:000049">
    <property type="entry name" value="Leukocyte immunoglobulin-like receptor subfamily B member 1"/>
    <property type="match status" value="1"/>
</dbReference>
<dbReference type="Gene3D" id="2.60.40.10">
    <property type="entry name" value="Immunoglobulins"/>
    <property type="match status" value="2"/>
</dbReference>
<dbReference type="InterPro" id="IPR036179">
    <property type="entry name" value="Ig-like_dom_sf"/>
</dbReference>
<dbReference type="InterPro" id="IPR013783">
    <property type="entry name" value="Ig-like_fold"/>
</dbReference>
<dbReference type="InterPro" id="IPR050412">
    <property type="entry name" value="Ig-like_Receptors_ImmuneReg"/>
</dbReference>
<dbReference type="InterPro" id="IPR003599">
    <property type="entry name" value="Ig_sub"/>
</dbReference>
<dbReference type="InterPro" id="IPR013151">
    <property type="entry name" value="Immunoglobulin_dom"/>
</dbReference>
<dbReference type="PANTHER" id="PTHR11738:SF168">
    <property type="entry name" value="IMMUNOGLOBULIN SUBTYPE DOMAIN-CONTAINING PROTEIN-RELATED"/>
    <property type="match status" value="1"/>
</dbReference>
<dbReference type="PANTHER" id="PTHR11738">
    <property type="entry name" value="MHC CLASS I NK CELL RECEPTOR"/>
    <property type="match status" value="1"/>
</dbReference>
<dbReference type="Pfam" id="PF00047">
    <property type="entry name" value="ig"/>
    <property type="match status" value="2"/>
</dbReference>
<dbReference type="SMART" id="SM00409">
    <property type="entry name" value="IG"/>
    <property type="match status" value="2"/>
</dbReference>
<dbReference type="SUPFAM" id="SSF48726">
    <property type="entry name" value="Immunoglobulin"/>
    <property type="match status" value="2"/>
</dbReference>
<gene>
    <name evidence="12" type="primary">KIR2DL1</name>
    <name type="synonym">CD158A</name>
    <name type="synonym">NKAT1</name>
</gene>
<accession>P43626</accession>
<accession>O43470</accession>
<accession>Q32WE6</accession>
<accession>Q6H2H3</accession>
<accession>Q6IST4</accession>
<protein>
    <recommendedName>
        <fullName evidence="11">Killer cell immunoglobulin-like receptor 2DL1</fullName>
    </recommendedName>
    <alternativeName>
        <fullName>CD158 antigen-like family member A</fullName>
    </alternativeName>
    <alternativeName>
        <fullName>Natural killer-associated transcript 1</fullName>
        <shortName>NKAT-1</shortName>
    </alternativeName>
    <alternativeName>
        <fullName>p58 natural killer cell receptor clones CL-42/47.11</fullName>
        <shortName>p58 NK receptor CL-42/47.11</shortName>
    </alternativeName>
    <alternativeName>
        <fullName>p58.1 MHC class-I-specific NK receptor</fullName>
    </alternativeName>
    <cdAntigenName>CD158a</cdAntigenName>
</protein>
<feature type="signal peptide" evidence="6">
    <location>
        <begin position="1"/>
        <end position="21"/>
    </location>
</feature>
<feature type="chain" id="PRO_0000015078" description="Killer cell immunoglobulin-like receptor 2DL1">
    <location>
        <begin position="22"/>
        <end position="348"/>
    </location>
</feature>
<feature type="topological domain" description="Extracellular" evidence="1">
    <location>
        <begin position="22"/>
        <end position="245"/>
    </location>
</feature>
<feature type="transmembrane region" description="Helical" evidence="1">
    <location>
        <begin position="246"/>
        <end position="264"/>
    </location>
</feature>
<feature type="topological domain" description="Cytoplasmic" evidence="1">
    <location>
        <begin position="265"/>
        <end position="348"/>
    </location>
</feature>
<feature type="domain" description="Ig-like C2-type 1">
    <location>
        <begin position="42"/>
        <end position="107"/>
    </location>
</feature>
<feature type="domain" description="Ig-like C2-type 2">
    <location>
        <begin position="142"/>
        <end position="205"/>
    </location>
</feature>
<feature type="region of interest" description="Disordered" evidence="2">
    <location>
        <begin position="220"/>
        <end position="239"/>
    </location>
</feature>
<feature type="glycosylation site" description="N-linked (GlcNAc...) asparagine" evidence="1">
    <location>
        <position position="67"/>
    </location>
</feature>
<feature type="glycosylation site" description="N-linked (GlcNAc...) asparagine" evidence="1">
    <location>
        <position position="84"/>
    </location>
</feature>
<feature type="glycosylation site" description="N-linked (GlcNAc...) asparagine" evidence="1">
    <location>
        <position position="144"/>
    </location>
</feature>
<feature type="glycosylation site" description="N-linked (GlcNAc...) asparagine" evidence="1">
    <location>
        <position position="178"/>
    </location>
</feature>
<feature type="disulfide bond" evidence="7 13">
    <location>
        <begin position="49"/>
        <end position="100"/>
    </location>
</feature>
<feature type="disulfide bond" evidence="7 13">
    <location>
        <begin position="149"/>
        <end position="198"/>
    </location>
</feature>
<feature type="splice variant" id="VSP_056314" description="In isoform 2." evidence="10">
    <original>TG</original>
    <variation>TERMFHHVGQACLKLPTSSDPTVSACQS</variation>
    <location>
        <begin position="238"/>
        <end position="239"/>
    </location>
</feature>
<feature type="sequence variant" id="VAR_003949" description="In dbSNP:rs2304224." evidence="9">
    <original>V</original>
    <variation>F</variation>
    <location>
        <position position="5"/>
    </location>
</feature>
<feature type="sequence variant" id="VAR_061332" description="In dbSNP:rs3810343.">
    <original>A</original>
    <variation>V</variation>
    <location>
        <position position="9"/>
    </location>
</feature>
<feature type="sequence variant" id="VAR_003950" description="In dbSNP:rs35509911." evidence="5 6 9">
    <original>R</original>
    <variation>P</variation>
    <location>
        <position position="37"/>
    </location>
</feature>
<feature type="sequence variant" id="VAR_056091" description="In dbSNP:rs673568.">
    <original>F</original>
    <variation>Y</variation>
    <location>
        <position position="66"/>
    </location>
</feature>
<feature type="sequence variant" id="VAR_061333" description="In dbSNP:rs687885.">
    <original>V</original>
    <variation>L</variation>
    <location>
        <position position="111"/>
    </location>
</feature>
<feature type="sequence variant" id="VAR_003951" description="In dbSNP:rs11673144." evidence="5 6 8 9">
    <original>L</original>
    <variation>P</variation>
    <location>
        <position position="135"/>
    </location>
</feature>
<feature type="sequence variant" id="VAR_010331" description="In dbSNP:rs111799279.">
    <original>P</original>
    <variation>T</variation>
    <location>
        <position position="175"/>
    </location>
</feature>
<feature type="sequence variant" id="VAR_010332" description="In dbSNP:rs147072532.">
    <original>D</original>
    <variation>N</variation>
    <location>
        <position position="184"/>
    </location>
</feature>
<feature type="sequence variant" id="VAR_010333" description="In dbSNP:rs666590.">
    <original>H</original>
    <variation>R</variation>
    <location>
        <position position="203"/>
    </location>
</feature>
<feature type="sequence variant" id="VAR_010334" description="In dbSNP:rs75232650.">
    <original>K</original>
    <variation>E</variation>
    <location>
        <position position="237"/>
    </location>
</feature>
<feature type="sequence variant" id="VAR_010335" description="In dbSNP:rs34721508.">
    <original>R</original>
    <variation>C</variation>
    <location>
        <position position="266"/>
    </location>
</feature>
<feature type="mutagenesis site" description="Abolishes interaction with ARRB2; when associated with A-332. Diminishes interaction with ARRB2." evidence="3">
    <original>Y</original>
    <variation>A</variation>
    <location>
        <position position="302"/>
    </location>
</feature>
<feature type="mutagenesis site" description="Abolishes interaction with ARRB2; when associated with A-302." evidence="3">
    <original>Y</original>
    <variation>A</variation>
    <location>
        <position position="332"/>
    </location>
</feature>
<feature type="strand" evidence="14">
    <location>
        <begin position="30"/>
        <end position="35"/>
    </location>
</feature>
<feature type="strand" evidence="14">
    <location>
        <begin position="37"/>
        <end position="40"/>
    </location>
</feature>
<feature type="strand" evidence="14">
    <location>
        <begin position="45"/>
        <end position="53"/>
    </location>
</feature>
<feature type="strand" evidence="14">
    <location>
        <begin position="56"/>
        <end position="66"/>
    </location>
</feature>
<feature type="strand" evidence="14">
    <location>
        <begin position="68"/>
        <end position="73"/>
    </location>
</feature>
<feature type="strand" evidence="14">
    <location>
        <begin position="75"/>
        <end position="77"/>
    </location>
</feature>
<feature type="strand" evidence="14">
    <location>
        <begin position="80"/>
        <end position="89"/>
    </location>
</feature>
<feature type="helix" evidence="14">
    <location>
        <begin position="92"/>
        <end position="94"/>
    </location>
</feature>
<feature type="strand" evidence="14">
    <location>
        <begin position="96"/>
        <end position="104"/>
    </location>
</feature>
<feature type="strand" evidence="14">
    <location>
        <begin position="118"/>
        <end position="123"/>
    </location>
</feature>
<feature type="strand" evidence="14">
    <location>
        <begin position="130"/>
        <end position="135"/>
    </location>
</feature>
<feature type="strand" evidence="14">
    <location>
        <begin position="137"/>
        <end position="140"/>
    </location>
</feature>
<feature type="strand" evidence="14">
    <location>
        <begin position="144"/>
        <end position="153"/>
    </location>
</feature>
<feature type="strand" evidence="14">
    <location>
        <begin position="156"/>
        <end position="162"/>
    </location>
</feature>
<feature type="strand" evidence="14">
    <location>
        <begin position="169"/>
        <end position="172"/>
    </location>
</feature>
<feature type="strand" evidence="14">
    <location>
        <begin position="174"/>
        <end position="177"/>
    </location>
</feature>
<feature type="strand" evidence="14">
    <location>
        <begin position="180"/>
        <end position="189"/>
    </location>
</feature>
<feature type="strand" evidence="14">
    <location>
        <begin position="194"/>
        <end position="202"/>
    </location>
</feature>
<feature type="strand" evidence="14">
    <location>
        <begin position="205"/>
        <end position="209"/>
    </location>
</feature>
<feature type="strand" evidence="14">
    <location>
        <begin position="216"/>
        <end position="221"/>
    </location>
</feature>
<sequence length="348" mass="38580">MSLLVVSMACVGFFLLQGAWPHEGVHRKPSLLAHPGRLVKSEETVILQCWSDVMFEHFLLHREGMFNDTLRLIGEHHDGVSKANFSISRMTQDLAGTYRCYGSVTHSPYQVSAPSDPLDIVIIGLYEKPSLSAQLGPTVLAGENVTLSCSSRSSYDMYHLSREGEAHERRLPAGPKVNGTFQADFPLGPATHGGTYRCFGSFHDSPYEWSKSSDPLLVSVTGNPSNSWPSPTEPSSKTGNPRHLHILIGTSVVIILFILLFFLLHRWCSNKKNAAVMDQESAGNRTANSEDSDEQDPQEVTYTQLNHCVFTQRKITRPSQRPKTPPTDIIVYTELPNAESRSKVVSCP</sequence>
<reference key="1">
    <citation type="journal article" date="1995" name="Science">
        <title>Cloning of immunoglobulin-superfamily members associated with HLA-C and HLA-B recognition by human natural killer cells.</title>
        <authorList>
            <person name="Colonna M."/>
            <person name="Samaridis J."/>
        </authorList>
    </citation>
    <scope>NUCLEOTIDE SEQUENCE [MRNA] (ISOFORM 1)</scope>
    <scope>VARIANTS PRO-37 AND PRO-135</scope>
    <source>
        <tissue>Natural killer cell</tissue>
    </source>
</reference>
<reference key="2">
    <citation type="journal article" date="1995" name="Immunity">
        <title>Molecular clones of the p58 NK cell receptor reveal immunoglobulin-related molecules with diversity in both the extra- and intracellular domains.</title>
        <authorList>
            <person name="Wagtmann N."/>
            <person name="Biassoni R."/>
            <person name="Cantoni C."/>
            <person name="Verdiani S."/>
            <person name="Malnati M.S."/>
            <person name="Vitale M."/>
            <person name="Bottino C."/>
            <person name="Moretta L."/>
            <person name="Moretta A."/>
            <person name="Long E.O."/>
        </authorList>
    </citation>
    <scope>NUCLEOTIDE SEQUENCE [MRNA] (ISOFORM 1)</scope>
    <scope>PROTEIN SEQUENCE OF 22-45</scope>
    <scope>VARIANTS PRO-37 AND PRO-135</scope>
    <source>
        <tissue>Natural killer cell</tissue>
    </source>
</reference>
<reference key="3">
    <citation type="journal article" date="1997" name="Immunity">
        <title>Human diversity in killer cell inhibitory receptor genes.</title>
        <authorList>
            <person name="Uhrberg M."/>
            <person name="Valiante N.M."/>
            <person name="Shum B.P."/>
            <person name="Shilling H.G."/>
            <person name="Lienert-Weidenbach K."/>
            <person name="Corliss B."/>
            <person name="Tyan D."/>
            <person name="Lanier L.L."/>
            <person name="Parham P."/>
        </authorList>
    </citation>
    <scope>NUCLEOTIDE SEQUENCE [MRNA] (ISOFORM 1)</scope>
    <scope>VARIANT PRO-135</scope>
</reference>
<reference key="4">
    <citation type="journal article" date="2003" name="J. Immunol.">
        <title>Activation of a subset of human NK cells upon contact with Plasmodium falciparum-infected erythrocytes.</title>
        <authorList>
            <person name="Artavanis-Tsakonas K."/>
            <person name="Eleme K."/>
            <person name="McQueen K.L."/>
            <person name="Cheng N.W."/>
            <person name="Parham P."/>
            <person name="Davis D.M."/>
            <person name="Riley E.M."/>
        </authorList>
    </citation>
    <scope>NUCLEOTIDE SEQUENCE [MRNA]</scope>
</reference>
<reference key="5">
    <citation type="journal article" date="2013" name="BMC Genomics">
        <title>Recombinant structures expand and contract inter and intragenic diversification at the KIR locus.</title>
        <authorList>
            <person name="Pyo C.W."/>
            <person name="Wang R."/>
            <person name="Vu Q."/>
            <person name="Cereb N."/>
            <person name="Yang S.Y."/>
            <person name="Duh F.M."/>
            <person name="Wolinsky S."/>
            <person name="Martin M.P."/>
            <person name="Carrington M."/>
            <person name="Geraghty D.E."/>
        </authorList>
    </citation>
    <scope>NUCLEOTIDE SEQUENCE [GENOMIC DNA]</scope>
</reference>
<reference key="6">
    <citation type="journal article" date="2014" name="Genes Immun.">
        <title>Characterization of a weakly expressed KIR2DL1 variant reveals a novel upstream promoter that controls KIR expression.</title>
        <authorList>
            <person name="Wright P.W."/>
            <person name="Li H."/>
            <person name="Huehn A."/>
            <person name="O'Connor G.M."/>
            <person name="Cooley S."/>
            <person name="Miller J.S."/>
            <person name="Anderson S.K."/>
        </authorList>
    </citation>
    <scope>NUCLEOTIDE SEQUENCE [MRNA]</scope>
</reference>
<reference key="7">
    <citation type="submission" date="2004-10" db="EMBL/GenBank/DDBJ databases">
        <title>Variants of KIR identified in Japanese donors.</title>
        <authorList>
            <person name="Yawata N."/>
            <person name="Yawata M."/>
            <person name="Parham P."/>
        </authorList>
    </citation>
    <scope>NUCLEOTIDE SEQUENCE [MRNA] (ISOFORM 1)</scope>
    <scope>VARIANTS PHE-5; PRO-37 AND PRO-135</scope>
</reference>
<reference key="8">
    <citation type="submission" date="2015-08" db="EMBL/GenBank/DDBJ databases">
        <title>Characterization of coding sequences of KIR2DL1 alleles in Chinese individuals.</title>
        <authorList>
            <person name="Xu Y."/>
            <person name="Deng Z."/>
        </authorList>
    </citation>
    <scope>NUCLEOTIDE SEQUENCE [GENOMIC DNA]</scope>
</reference>
<reference key="9">
    <citation type="submission" date="2017-12" db="EMBL/GenBank/DDBJ databases">
        <title>African allele diversity.</title>
        <authorList>
            <person name="Nemat-Gorgani N."/>
            <person name="Norman P.J."/>
            <person name="Parham P."/>
        </authorList>
    </citation>
    <scope>NUCLEOTIDE SEQUENCE [GENOMIC DNA]</scope>
</reference>
<reference key="10">
    <citation type="submission" date="2019-05" db="EMBL/GenBank/DDBJ databases">
        <authorList>
            <person name="Marsh S."/>
        </authorList>
    </citation>
    <scope>NUCLEOTIDE SEQUENCE [GENOMIC DNA]</scope>
</reference>
<reference key="11">
    <citation type="submission" date="2019-07" db="EMBL/GenBank/DDBJ databases">
        <title>A Detailed View of KIR Haplotype Structures and Gene Families as Provided by a New Motif-based Multiple Sequence Alignment.</title>
        <authorList>
            <person name="Roe D."/>
            <person name="Vierra-Green C."/>
            <person name="Spellman S."/>
            <person name="Maiers M."/>
            <person name="Kuang R."/>
        </authorList>
    </citation>
    <scope>NUCLEOTIDE SEQUENCE [GENOMIC DNA]</scope>
</reference>
<reference key="12">
    <citation type="journal article" date="2004" name="Nature">
        <title>The DNA sequence and biology of human chromosome 19.</title>
        <authorList>
            <person name="Grimwood J."/>
            <person name="Gordon L.A."/>
            <person name="Olsen A.S."/>
            <person name="Terry A."/>
            <person name="Schmutz J."/>
            <person name="Lamerdin J.E."/>
            <person name="Hellsten U."/>
            <person name="Goodstein D."/>
            <person name="Couronne O."/>
            <person name="Tran-Gyamfi M."/>
            <person name="Aerts A."/>
            <person name="Altherr M."/>
            <person name="Ashworth L."/>
            <person name="Bajorek E."/>
            <person name="Black S."/>
            <person name="Branscomb E."/>
            <person name="Caenepeel S."/>
            <person name="Carrano A.V."/>
            <person name="Caoile C."/>
            <person name="Chan Y.M."/>
            <person name="Christensen M."/>
            <person name="Cleland C.A."/>
            <person name="Copeland A."/>
            <person name="Dalin E."/>
            <person name="Dehal P."/>
            <person name="Denys M."/>
            <person name="Detter J.C."/>
            <person name="Escobar J."/>
            <person name="Flowers D."/>
            <person name="Fotopulos D."/>
            <person name="Garcia C."/>
            <person name="Georgescu A.M."/>
            <person name="Glavina T."/>
            <person name="Gomez M."/>
            <person name="Gonzales E."/>
            <person name="Groza M."/>
            <person name="Hammon N."/>
            <person name="Hawkins T."/>
            <person name="Haydu L."/>
            <person name="Ho I."/>
            <person name="Huang W."/>
            <person name="Israni S."/>
            <person name="Jett J."/>
            <person name="Kadner K."/>
            <person name="Kimball H."/>
            <person name="Kobayashi A."/>
            <person name="Larionov V."/>
            <person name="Leem S.-H."/>
            <person name="Lopez F."/>
            <person name="Lou Y."/>
            <person name="Lowry S."/>
            <person name="Malfatti S."/>
            <person name="Martinez D."/>
            <person name="McCready P.M."/>
            <person name="Medina C."/>
            <person name="Morgan J."/>
            <person name="Nelson K."/>
            <person name="Nolan M."/>
            <person name="Ovcharenko I."/>
            <person name="Pitluck S."/>
            <person name="Pollard M."/>
            <person name="Popkie A.P."/>
            <person name="Predki P."/>
            <person name="Quan G."/>
            <person name="Ramirez L."/>
            <person name="Rash S."/>
            <person name="Retterer J."/>
            <person name="Rodriguez A."/>
            <person name="Rogers S."/>
            <person name="Salamov A."/>
            <person name="Salazar A."/>
            <person name="She X."/>
            <person name="Smith D."/>
            <person name="Slezak T."/>
            <person name="Solovyev V."/>
            <person name="Thayer N."/>
            <person name="Tice H."/>
            <person name="Tsai M."/>
            <person name="Ustaszewska A."/>
            <person name="Vo N."/>
            <person name="Wagner M."/>
            <person name="Wheeler J."/>
            <person name="Wu K."/>
            <person name="Xie G."/>
            <person name="Yang J."/>
            <person name="Dubchak I."/>
            <person name="Furey T.S."/>
            <person name="DeJong P."/>
            <person name="Dickson M."/>
            <person name="Gordon D."/>
            <person name="Eichler E.E."/>
            <person name="Pennacchio L.A."/>
            <person name="Richardson P."/>
            <person name="Stubbs L."/>
            <person name="Rokhsar D.S."/>
            <person name="Myers R.M."/>
            <person name="Rubin E.M."/>
            <person name="Lucas S.M."/>
        </authorList>
    </citation>
    <scope>NUCLEOTIDE SEQUENCE [LARGE SCALE GENOMIC DNA]</scope>
</reference>
<reference key="13">
    <citation type="journal article" date="2004" name="Genome Res.">
        <title>The status, quality, and expansion of the NIH full-length cDNA project: the Mammalian Gene Collection (MGC).</title>
        <authorList>
            <consortium name="The MGC Project Team"/>
        </authorList>
    </citation>
    <scope>NUCLEOTIDE SEQUENCE [LARGE SCALE MRNA] (ISOFORM 2)</scope>
</reference>
<reference key="14">
    <citation type="journal article" date="2008" name="Eur. J. Immunol.">
        <title>Evidence that the KIR2DS5 gene codes for a surface receptor triggering natural killer cell function.</title>
        <authorList>
            <person name="Della Chiesa M."/>
            <person name="Romeo E."/>
            <person name="Falco M."/>
            <person name="Balsamo M."/>
            <person name="Augugliaro R."/>
            <person name="Moretta L."/>
            <person name="Bottino C."/>
            <person name="Moretta A."/>
            <person name="Vitale M."/>
        </authorList>
    </citation>
    <scope>FUNCTION</scope>
    <scope>TISSUE SPECIFICITY</scope>
    <scope>SUBCELLULAR LOCATION</scope>
</reference>
<reference key="15">
    <citation type="journal article" date="2008" name="Nat. Immunol.">
        <title>An essential function for beta-arrestin 2 in the inhibitory signaling of natural killer cells.</title>
        <authorList>
            <person name="Yu M.-C."/>
            <person name="Su L.-L."/>
            <person name="Zou L."/>
            <person name="Liu Y."/>
            <person name="Wu N."/>
            <person name="Kong L."/>
            <person name="Zhuang Z.-H."/>
            <person name="Sun L."/>
            <person name="Liu H.P."/>
            <person name="Hu J.-H."/>
            <person name="Li D."/>
            <person name="Strominger J.L."/>
            <person name="Zang J.-W."/>
            <person name="Pei G."/>
            <person name="Ge B.-X."/>
        </authorList>
    </citation>
    <scope>FUNCTION</scope>
    <scope>INTERACTION WITH ARRB2; PTPN6 AND PTPN11</scope>
    <scope>MUTAGENESIS OF TYR-302 AND TYR-332</scope>
</reference>
<reference key="16">
    <citation type="journal article" date="1997" name="Nature">
        <title>Structure of the inhibitory receptor for human natural killer cells resembles haematopoietic receptors.</title>
        <authorList>
            <person name="Fan Q.R."/>
            <person name="Mosyak L."/>
            <person name="Winter C.C."/>
            <person name="Wagtmann N."/>
            <person name="Long E.O."/>
            <person name="Wiley D.C."/>
        </authorList>
    </citation>
    <scope>X-RAY CRYSTALLOGRAPHY (1.70 ANGSTROMS) OF 22-221</scope>
    <scope>DISULFIDE BONDS</scope>
</reference>
<evidence type="ECO:0000255" key="1"/>
<evidence type="ECO:0000256" key="2">
    <source>
        <dbReference type="SAM" id="MobiDB-lite"/>
    </source>
</evidence>
<evidence type="ECO:0000269" key="3">
    <source>
    </source>
</evidence>
<evidence type="ECO:0000269" key="4">
    <source>
    </source>
</evidence>
<evidence type="ECO:0000269" key="5">
    <source>
    </source>
</evidence>
<evidence type="ECO:0000269" key="6">
    <source>
    </source>
</evidence>
<evidence type="ECO:0000269" key="7">
    <source>
    </source>
</evidence>
<evidence type="ECO:0000269" key="8">
    <source>
    </source>
</evidence>
<evidence type="ECO:0000269" key="9">
    <source ref="7"/>
</evidence>
<evidence type="ECO:0000303" key="10">
    <source>
    </source>
</evidence>
<evidence type="ECO:0000305" key="11"/>
<evidence type="ECO:0000312" key="12">
    <source>
        <dbReference type="HGNC" id="HGNC:6329"/>
    </source>
</evidence>
<evidence type="ECO:0007744" key="13">
    <source>
        <dbReference type="PDB" id="1NKR"/>
    </source>
</evidence>
<evidence type="ECO:0007829" key="14">
    <source>
        <dbReference type="PDB" id="1NKR"/>
    </source>
</evidence>
<name>KI2L1_HUMAN</name>
<proteinExistence type="evidence at protein level"/>
<keyword id="KW-0002">3D-structure</keyword>
<keyword id="KW-0025">Alternative splicing</keyword>
<keyword id="KW-1003">Cell membrane</keyword>
<keyword id="KW-0903">Direct protein sequencing</keyword>
<keyword id="KW-1015">Disulfide bond</keyword>
<keyword id="KW-0325">Glycoprotein</keyword>
<keyword id="KW-0393">Immunoglobulin domain</keyword>
<keyword id="KW-0472">Membrane</keyword>
<keyword id="KW-0675">Receptor</keyword>
<keyword id="KW-1185">Reference proteome</keyword>
<keyword id="KW-0677">Repeat</keyword>
<keyword id="KW-0732">Signal</keyword>
<keyword id="KW-0812">Transmembrane</keyword>
<keyword id="KW-1133">Transmembrane helix</keyword>
<organism>
    <name type="scientific">Homo sapiens</name>
    <name type="common">Human</name>
    <dbReference type="NCBI Taxonomy" id="9606"/>
    <lineage>
        <taxon>Eukaryota</taxon>
        <taxon>Metazoa</taxon>
        <taxon>Chordata</taxon>
        <taxon>Craniata</taxon>
        <taxon>Vertebrata</taxon>
        <taxon>Euteleostomi</taxon>
        <taxon>Mammalia</taxon>
        <taxon>Eutheria</taxon>
        <taxon>Euarchontoglires</taxon>
        <taxon>Primates</taxon>
        <taxon>Haplorrhini</taxon>
        <taxon>Catarrhini</taxon>
        <taxon>Hominidae</taxon>
        <taxon>Homo</taxon>
    </lineage>
</organism>